<sequence length="427" mass="47154">MASVVLIGTQWGDEGKGKVTDFLAEKADLVVRYQGGNNAGHTVVAKGEEFKLHLIPSGILYEDKTCVIGNGVVVDPKVLLEELAYLSERKVKTGKLLISSNAHVIMPYHRLLDALEEDSRGEHKIGTTKRGIGPAYMDKTLRIGIRIMDLIDDEEFAAKLRRNLQEKNNLLTKVYGVEPLDYDAIYQEYSGYAQKIRGLVADSSLVIDESLKAGEKVLFEGAQGTLLDLDHGTYPYVTSSHPIAGGACTGAGVGPTRINRVVGVIKAYTTRVGEGPFPTELADETGELMRQNGHEFGTTTGRARRCGWFDAVIARYAVRVSGISDFALMKLDVLSGFEKIKICVGYRVNNEVIYEFPQSQKIFKACEPVYEVIEGWQEDITGVTRFEDLPKAAQDYVRRIEQLTETQVTLIAVGPGREQTIVRGEIF</sequence>
<organism>
    <name type="scientific">Desulfitobacterium hafniense (strain DSM 10664 / DCB-2)</name>
    <dbReference type="NCBI Taxonomy" id="272564"/>
    <lineage>
        <taxon>Bacteria</taxon>
        <taxon>Bacillati</taxon>
        <taxon>Bacillota</taxon>
        <taxon>Clostridia</taxon>
        <taxon>Eubacteriales</taxon>
        <taxon>Desulfitobacteriaceae</taxon>
        <taxon>Desulfitobacterium</taxon>
    </lineage>
</organism>
<dbReference type="EC" id="6.3.4.4" evidence="1"/>
<dbReference type="EMBL" id="CP001336">
    <property type="protein sequence ID" value="ACL22921.1"/>
    <property type="molecule type" value="Genomic_DNA"/>
</dbReference>
<dbReference type="RefSeq" id="WP_015945535.1">
    <property type="nucleotide sequence ID" value="NC_011830.1"/>
</dbReference>
<dbReference type="SMR" id="B8G0I5"/>
<dbReference type="KEGG" id="dhd:Dhaf_4927"/>
<dbReference type="HOGENOM" id="CLU_029848_0_0_9"/>
<dbReference type="UniPathway" id="UPA00075">
    <property type="reaction ID" value="UER00335"/>
</dbReference>
<dbReference type="Proteomes" id="UP000007726">
    <property type="component" value="Chromosome"/>
</dbReference>
<dbReference type="GO" id="GO:0005737">
    <property type="term" value="C:cytoplasm"/>
    <property type="evidence" value="ECO:0007669"/>
    <property type="project" value="UniProtKB-SubCell"/>
</dbReference>
<dbReference type="GO" id="GO:0004019">
    <property type="term" value="F:adenylosuccinate synthase activity"/>
    <property type="evidence" value="ECO:0007669"/>
    <property type="project" value="UniProtKB-UniRule"/>
</dbReference>
<dbReference type="GO" id="GO:0005525">
    <property type="term" value="F:GTP binding"/>
    <property type="evidence" value="ECO:0007669"/>
    <property type="project" value="UniProtKB-UniRule"/>
</dbReference>
<dbReference type="GO" id="GO:0000287">
    <property type="term" value="F:magnesium ion binding"/>
    <property type="evidence" value="ECO:0007669"/>
    <property type="project" value="UniProtKB-UniRule"/>
</dbReference>
<dbReference type="GO" id="GO:0044208">
    <property type="term" value="P:'de novo' AMP biosynthetic process"/>
    <property type="evidence" value="ECO:0007669"/>
    <property type="project" value="UniProtKB-UniRule"/>
</dbReference>
<dbReference type="GO" id="GO:0046040">
    <property type="term" value="P:IMP metabolic process"/>
    <property type="evidence" value="ECO:0007669"/>
    <property type="project" value="TreeGrafter"/>
</dbReference>
<dbReference type="CDD" id="cd03108">
    <property type="entry name" value="AdSS"/>
    <property type="match status" value="1"/>
</dbReference>
<dbReference type="FunFam" id="1.10.300.10:FF:000001">
    <property type="entry name" value="Adenylosuccinate synthetase"/>
    <property type="match status" value="1"/>
</dbReference>
<dbReference type="FunFam" id="3.90.170.10:FF:000001">
    <property type="entry name" value="Adenylosuccinate synthetase"/>
    <property type="match status" value="1"/>
</dbReference>
<dbReference type="Gene3D" id="3.40.440.10">
    <property type="entry name" value="Adenylosuccinate Synthetase, subunit A, domain 1"/>
    <property type="match status" value="1"/>
</dbReference>
<dbReference type="Gene3D" id="1.10.300.10">
    <property type="entry name" value="Adenylosuccinate Synthetase, subunit A, domain 2"/>
    <property type="match status" value="1"/>
</dbReference>
<dbReference type="Gene3D" id="3.90.170.10">
    <property type="entry name" value="Adenylosuccinate Synthetase, subunit A, domain 3"/>
    <property type="match status" value="1"/>
</dbReference>
<dbReference type="HAMAP" id="MF_00011">
    <property type="entry name" value="Adenylosucc_synth"/>
    <property type="match status" value="1"/>
</dbReference>
<dbReference type="InterPro" id="IPR018220">
    <property type="entry name" value="Adenylosuccin_syn_GTP-bd"/>
</dbReference>
<dbReference type="InterPro" id="IPR033128">
    <property type="entry name" value="Adenylosuccin_syn_Lys_AS"/>
</dbReference>
<dbReference type="InterPro" id="IPR042109">
    <property type="entry name" value="Adenylosuccinate_synth_dom1"/>
</dbReference>
<dbReference type="InterPro" id="IPR042110">
    <property type="entry name" value="Adenylosuccinate_synth_dom2"/>
</dbReference>
<dbReference type="InterPro" id="IPR042111">
    <property type="entry name" value="Adenylosuccinate_synth_dom3"/>
</dbReference>
<dbReference type="InterPro" id="IPR001114">
    <property type="entry name" value="Adenylosuccinate_synthetase"/>
</dbReference>
<dbReference type="InterPro" id="IPR027417">
    <property type="entry name" value="P-loop_NTPase"/>
</dbReference>
<dbReference type="NCBIfam" id="NF002223">
    <property type="entry name" value="PRK01117.1"/>
    <property type="match status" value="1"/>
</dbReference>
<dbReference type="NCBIfam" id="TIGR00184">
    <property type="entry name" value="purA"/>
    <property type="match status" value="1"/>
</dbReference>
<dbReference type="PANTHER" id="PTHR11846">
    <property type="entry name" value="ADENYLOSUCCINATE SYNTHETASE"/>
    <property type="match status" value="1"/>
</dbReference>
<dbReference type="PANTHER" id="PTHR11846:SF0">
    <property type="entry name" value="ADENYLOSUCCINATE SYNTHETASE"/>
    <property type="match status" value="1"/>
</dbReference>
<dbReference type="Pfam" id="PF00709">
    <property type="entry name" value="Adenylsucc_synt"/>
    <property type="match status" value="1"/>
</dbReference>
<dbReference type="SMART" id="SM00788">
    <property type="entry name" value="Adenylsucc_synt"/>
    <property type="match status" value="1"/>
</dbReference>
<dbReference type="SUPFAM" id="SSF52540">
    <property type="entry name" value="P-loop containing nucleoside triphosphate hydrolases"/>
    <property type="match status" value="1"/>
</dbReference>
<dbReference type="PROSITE" id="PS01266">
    <property type="entry name" value="ADENYLOSUCCIN_SYN_1"/>
    <property type="match status" value="1"/>
</dbReference>
<dbReference type="PROSITE" id="PS00513">
    <property type="entry name" value="ADENYLOSUCCIN_SYN_2"/>
    <property type="match status" value="1"/>
</dbReference>
<evidence type="ECO:0000255" key="1">
    <source>
        <dbReference type="HAMAP-Rule" id="MF_00011"/>
    </source>
</evidence>
<protein>
    <recommendedName>
        <fullName evidence="1">Adenylosuccinate synthetase</fullName>
        <shortName evidence="1">AMPSase</shortName>
        <shortName evidence="1">AdSS</shortName>
        <ecNumber evidence="1">6.3.4.4</ecNumber>
    </recommendedName>
    <alternativeName>
        <fullName evidence="1">IMP--aspartate ligase</fullName>
    </alternativeName>
</protein>
<keyword id="KW-0963">Cytoplasm</keyword>
<keyword id="KW-0342">GTP-binding</keyword>
<keyword id="KW-0436">Ligase</keyword>
<keyword id="KW-0460">Magnesium</keyword>
<keyword id="KW-0479">Metal-binding</keyword>
<keyword id="KW-0547">Nucleotide-binding</keyword>
<keyword id="KW-0658">Purine biosynthesis</keyword>
<proteinExistence type="inferred from homology"/>
<gene>
    <name evidence="1" type="primary">purA</name>
    <name type="ordered locus">Dhaf_4927</name>
</gene>
<reference key="1">
    <citation type="journal article" date="2012" name="BMC Microbiol.">
        <title>Genome sequence of Desulfitobacterium hafniense DCB-2, a Gram-positive anaerobe capable of dehalogenation and metal reduction.</title>
        <authorList>
            <person name="Kim S.H."/>
            <person name="Harzman C."/>
            <person name="Davis J.K."/>
            <person name="Hutcheson R."/>
            <person name="Broderick J.B."/>
            <person name="Marsh T.L."/>
            <person name="Tiedje J.M."/>
        </authorList>
    </citation>
    <scope>NUCLEOTIDE SEQUENCE [LARGE SCALE GENOMIC DNA]</scope>
    <source>
        <strain>DSM 10664 / DCB-2</strain>
    </source>
</reference>
<comment type="function">
    <text evidence="1">Plays an important role in the de novo pathway of purine nucleotide biosynthesis. Catalyzes the first committed step in the biosynthesis of AMP from IMP.</text>
</comment>
<comment type="catalytic activity">
    <reaction evidence="1">
        <text>IMP + L-aspartate + GTP = N(6)-(1,2-dicarboxyethyl)-AMP + GDP + phosphate + 2 H(+)</text>
        <dbReference type="Rhea" id="RHEA:15753"/>
        <dbReference type="ChEBI" id="CHEBI:15378"/>
        <dbReference type="ChEBI" id="CHEBI:29991"/>
        <dbReference type="ChEBI" id="CHEBI:37565"/>
        <dbReference type="ChEBI" id="CHEBI:43474"/>
        <dbReference type="ChEBI" id="CHEBI:57567"/>
        <dbReference type="ChEBI" id="CHEBI:58053"/>
        <dbReference type="ChEBI" id="CHEBI:58189"/>
        <dbReference type="EC" id="6.3.4.4"/>
    </reaction>
</comment>
<comment type="cofactor">
    <cofactor evidence="1">
        <name>Mg(2+)</name>
        <dbReference type="ChEBI" id="CHEBI:18420"/>
    </cofactor>
    <text evidence="1">Binds 1 Mg(2+) ion per subunit.</text>
</comment>
<comment type="pathway">
    <text evidence="1">Purine metabolism; AMP biosynthesis via de novo pathway; AMP from IMP: step 1/2.</text>
</comment>
<comment type="subunit">
    <text evidence="1">Homodimer.</text>
</comment>
<comment type="subcellular location">
    <subcellularLocation>
        <location evidence="1">Cytoplasm</location>
    </subcellularLocation>
</comment>
<comment type="similarity">
    <text evidence="1">Belongs to the adenylosuccinate synthetase family.</text>
</comment>
<feature type="chain" id="PRO_1000194747" description="Adenylosuccinate synthetase">
    <location>
        <begin position="1"/>
        <end position="427"/>
    </location>
</feature>
<feature type="active site" description="Proton acceptor" evidence="1">
    <location>
        <position position="13"/>
    </location>
</feature>
<feature type="active site" description="Proton donor" evidence="1">
    <location>
        <position position="41"/>
    </location>
</feature>
<feature type="binding site" evidence="1">
    <location>
        <begin position="12"/>
        <end position="18"/>
    </location>
    <ligand>
        <name>GTP</name>
        <dbReference type="ChEBI" id="CHEBI:37565"/>
    </ligand>
</feature>
<feature type="binding site" description="in other chain" evidence="1">
    <location>
        <begin position="13"/>
        <end position="16"/>
    </location>
    <ligand>
        <name>IMP</name>
        <dbReference type="ChEBI" id="CHEBI:58053"/>
        <note>ligand shared between dimeric partners</note>
    </ligand>
</feature>
<feature type="binding site" evidence="1">
    <location>
        <position position="13"/>
    </location>
    <ligand>
        <name>Mg(2+)</name>
        <dbReference type="ChEBI" id="CHEBI:18420"/>
    </ligand>
</feature>
<feature type="binding site" description="in other chain" evidence="1">
    <location>
        <begin position="38"/>
        <end position="41"/>
    </location>
    <ligand>
        <name>IMP</name>
        <dbReference type="ChEBI" id="CHEBI:58053"/>
        <note>ligand shared between dimeric partners</note>
    </ligand>
</feature>
<feature type="binding site" evidence="1">
    <location>
        <begin position="40"/>
        <end position="42"/>
    </location>
    <ligand>
        <name>GTP</name>
        <dbReference type="ChEBI" id="CHEBI:37565"/>
    </ligand>
</feature>
<feature type="binding site" evidence="1">
    <location>
        <position position="40"/>
    </location>
    <ligand>
        <name>Mg(2+)</name>
        <dbReference type="ChEBI" id="CHEBI:18420"/>
    </ligand>
</feature>
<feature type="binding site" description="in other chain" evidence="1">
    <location>
        <position position="128"/>
    </location>
    <ligand>
        <name>IMP</name>
        <dbReference type="ChEBI" id="CHEBI:58053"/>
        <note>ligand shared between dimeric partners</note>
    </ligand>
</feature>
<feature type="binding site" evidence="1">
    <location>
        <position position="142"/>
    </location>
    <ligand>
        <name>IMP</name>
        <dbReference type="ChEBI" id="CHEBI:58053"/>
        <note>ligand shared between dimeric partners</note>
    </ligand>
</feature>
<feature type="binding site" description="in other chain" evidence="1">
    <location>
        <position position="223"/>
    </location>
    <ligand>
        <name>IMP</name>
        <dbReference type="ChEBI" id="CHEBI:58053"/>
        <note>ligand shared between dimeric partners</note>
    </ligand>
</feature>
<feature type="binding site" description="in other chain" evidence="1">
    <location>
        <position position="238"/>
    </location>
    <ligand>
        <name>IMP</name>
        <dbReference type="ChEBI" id="CHEBI:58053"/>
        <note>ligand shared between dimeric partners</note>
    </ligand>
</feature>
<feature type="binding site" evidence="1">
    <location>
        <begin position="298"/>
        <end position="304"/>
    </location>
    <ligand>
        <name>substrate</name>
    </ligand>
</feature>
<feature type="binding site" description="in other chain" evidence="1">
    <location>
        <position position="302"/>
    </location>
    <ligand>
        <name>IMP</name>
        <dbReference type="ChEBI" id="CHEBI:58053"/>
        <note>ligand shared between dimeric partners</note>
    </ligand>
</feature>
<feature type="binding site" evidence="1">
    <location>
        <position position="304"/>
    </location>
    <ligand>
        <name>GTP</name>
        <dbReference type="ChEBI" id="CHEBI:37565"/>
    </ligand>
</feature>
<feature type="binding site" evidence="1">
    <location>
        <begin position="330"/>
        <end position="332"/>
    </location>
    <ligand>
        <name>GTP</name>
        <dbReference type="ChEBI" id="CHEBI:37565"/>
    </ligand>
</feature>
<feature type="binding site" evidence="1">
    <location>
        <begin position="412"/>
        <end position="414"/>
    </location>
    <ligand>
        <name>GTP</name>
        <dbReference type="ChEBI" id="CHEBI:37565"/>
    </ligand>
</feature>
<name>PURA_DESHD</name>
<accession>B8G0I5</accession>